<comment type="function">
    <text evidence="1 4 5">Transcriptional regulator of a CBASS antivirus system (By similarity). CBASS (cyclic oligonucleotide-based antiphage signaling system) provides immunity against bacteriophage. The CD-NTase protein synthesizes cyclic nucleotides in response to infection; these serve as specific second messenger signals. The signals activate a diverse range of effectors, leading to bacterial cell death and thus abortive phage infection. A type III CBASS system (PubMed:37595565). Expression of this CBASS system (Cap18-Cap6-Cap7-CdnC-CapW-Cap17) in a susceptible E.coli (strain MG1655) confers resistance to bacteriophage P1 (PubMed:37595565). Binds specifically to and represses expression from the CBASS promoter, found between the genes for divergently transcribed capW and cdnC (By similarity).</text>
</comment>
<comment type="subunit">
    <text evidence="1">Homodimer.</text>
</comment>
<comment type="induction">
    <text evidence="1">Represses its own transcription.</text>
</comment>
<comment type="domain">
    <text evidence="1">Has an N-terminal winged HTH domain, a central WYL domain and a C-terminal WCX domain; the WYL domain of each subunit reaches into the other subunit to form swapped domains.</text>
</comment>
<sequence length="299" mass="34700">MPDNFREGDKQDSQKGRQGARWGQERRLEFIDYRLRWDGQINRSSLTDFFGISVPQASLDLSEYTKLAPDNLEYDMSSRVYRSTKLFQPVYMTSSLECYLNDLLQVAIQPEIHFGSFLGWRSPVAAVPRLLRRLDTDVVSQILRAIRENEAVHVIYQSMSDPQGSKRTLTPHSLVHDGYRWHTRAWCHKRGEYRDFLLSRIVQAQNAGPDEERANGDLAWNTFIKIILIAHPGLCLAQRNLIERDYAMIDGEIHLECRQALLHYLLFQLNLTETQSHQAPEALQLALKNKDEIYALLKQ</sequence>
<evidence type="ECO:0000250" key="1">
    <source>
        <dbReference type="UniProtKB" id="P0DX76"/>
    </source>
</evidence>
<evidence type="ECO:0000255" key="2">
    <source>
        <dbReference type="PROSITE-ProRule" id="PRU01395"/>
    </source>
</evidence>
<evidence type="ECO:0000256" key="3">
    <source>
        <dbReference type="SAM" id="MobiDB-lite"/>
    </source>
</evidence>
<evidence type="ECO:0000269" key="4">
    <source>
    </source>
</evidence>
<evidence type="ECO:0000303" key="5">
    <source>
    </source>
</evidence>
<evidence type="ECO:0000305" key="6"/>
<evidence type="ECO:0000312" key="7">
    <source>
        <dbReference type="EMBL" id="ELC78142.1"/>
    </source>
</evidence>
<feature type="chain" id="PRO_0000459330" description="DNA-binding transcriptional repressor CapW">
    <location>
        <begin position="1"/>
        <end position="299"/>
    </location>
</feature>
<feature type="domain" description="WYL" evidence="2">
    <location>
        <begin position="131"/>
        <end position="211"/>
    </location>
</feature>
<feature type="region of interest" description="Winged HTH domain" evidence="1">
    <location>
        <begin position="1"/>
        <end position="95"/>
    </location>
</feature>
<feature type="region of interest" description="Disordered" evidence="3">
    <location>
        <begin position="1"/>
        <end position="21"/>
    </location>
</feature>
<feature type="region of interest" description="WYL domain" evidence="1">
    <location>
        <begin position="96"/>
        <end position="207"/>
    </location>
</feature>
<feature type="region of interest" description="Probable ligand-binding region" evidence="1">
    <location>
        <begin position="156"/>
        <end position="200"/>
    </location>
</feature>
<feature type="region of interest" description="WCX domain" evidence="1">
    <location>
        <begin position="208"/>
        <end position="299"/>
    </location>
</feature>
<feature type="compositionally biased region" description="Basic and acidic residues" evidence="3">
    <location>
        <begin position="1"/>
        <end position="15"/>
    </location>
</feature>
<name>CAPW_ECOKT</name>
<organism>
    <name type="scientific">Escherichia coli (strain KTE188)</name>
    <dbReference type="NCBI Taxonomy" id="1181734"/>
    <lineage>
        <taxon>Bacteria</taxon>
        <taxon>Pseudomonadati</taxon>
        <taxon>Pseudomonadota</taxon>
        <taxon>Gammaproteobacteria</taxon>
        <taxon>Enterobacterales</taxon>
        <taxon>Enterobacteriaceae</taxon>
        <taxon>Escherichia</taxon>
    </lineage>
</organism>
<gene>
    <name evidence="5" type="primary">capW</name>
    <name evidence="7" type="ORF">A13M_04333</name>
</gene>
<protein>
    <recommendedName>
        <fullName evidence="6">DNA-binding transcriptional repressor CapW</fullName>
    </recommendedName>
    <alternativeName>
        <fullName evidence="6">CBASS-associated protein with WYL domain</fullName>
        <shortName evidence="5">CapW</shortName>
    </alternativeName>
</protein>
<proteinExistence type="evidence at protein level"/>
<accession>P0DX70</accession>
<dbReference type="EMBL" id="ANTE01000038">
    <property type="protein sequence ID" value="ELC78142.1"/>
    <property type="molecule type" value="Genomic_DNA"/>
</dbReference>
<dbReference type="RefSeq" id="WP_001534693.1">
    <property type="nucleotide sequence ID" value="NZ_KB732426.1"/>
</dbReference>
<dbReference type="SMR" id="P0DX70"/>
<dbReference type="GO" id="GO:0003677">
    <property type="term" value="F:DNA binding"/>
    <property type="evidence" value="ECO:0007669"/>
    <property type="project" value="UniProtKB-KW"/>
</dbReference>
<dbReference type="GO" id="GO:0051607">
    <property type="term" value="P:defense response to virus"/>
    <property type="evidence" value="ECO:0007669"/>
    <property type="project" value="UniProtKB-KW"/>
</dbReference>
<dbReference type="InterPro" id="IPR016634">
    <property type="entry name" value="CapW-like"/>
</dbReference>
<dbReference type="InterPro" id="IPR051534">
    <property type="entry name" value="CBASS_pafABC_assoc_protein"/>
</dbReference>
<dbReference type="InterPro" id="IPR026881">
    <property type="entry name" value="WYL_dom"/>
</dbReference>
<dbReference type="PANTHER" id="PTHR34580">
    <property type="match status" value="1"/>
</dbReference>
<dbReference type="PANTHER" id="PTHR34580:SF3">
    <property type="entry name" value="PROTEIN PAFB"/>
    <property type="match status" value="1"/>
</dbReference>
<dbReference type="Pfam" id="PF13280">
    <property type="entry name" value="WYL"/>
    <property type="match status" value="1"/>
</dbReference>
<dbReference type="PIRSF" id="PIRSF015558">
    <property type="entry name" value="Txn_reg_DeoR_prd"/>
    <property type="match status" value="1"/>
</dbReference>
<dbReference type="PROSITE" id="PS52050">
    <property type="entry name" value="WYL"/>
    <property type="match status" value="1"/>
</dbReference>
<reference key="1">
    <citation type="submission" date="2012-12" db="EMBL/GenBank/DDBJ databases">
        <title>The Genome Sequence of Escherichia coli KTE188.</title>
        <authorList>
            <person name="Feldgarden M."/>
            <person name="Nielsen K.L."/>
            <person name="Frimodt-Moller N."/>
            <person name="Andersen P.S."/>
            <person name="Walker B."/>
            <person name="Young S.K."/>
            <person name="Zeng Q."/>
            <person name="Gargeya S."/>
            <person name="Fitzgerald M."/>
            <person name="Haas B."/>
            <person name="Abouelleil A."/>
            <person name="Alvarado L."/>
            <person name="Arachchi H.M."/>
            <person name="Berlin A.M."/>
            <person name="Chapman S.B."/>
            <person name="Dewar J."/>
            <person name="Goldberg J."/>
            <person name="Griggs A."/>
            <person name="Gujja S."/>
            <person name="Hansen M."/>
            <person name="Howarth C."/>
            <person name="Imamovic A."/>
            <person name="Larimer J."/>
            <person name="McCowan C."/>
            <person name="Murphy C."/>
            <person name="Neiman D."/>
            <person name="Pearson M."/>
            <person name="Priest M."/>
            <person name="Roberts A."/>
            <person name="Saif S."/>
            <person name="Shea T."/>
            <person name="Sisk P."/>
            <person name="Sykes S."/>
            <person name="Wortman J."/>
            <person name="Nusbaum C."/>
            <person name="Birren B."/>
        </authorList>
    </citation>
    <scope>NUCLEOTIDE SEQUENCE [LARGE SCALE GENOMIC DNA]</scope>
    <source>
        <strain>KTE188</strain>
    </source>
</reference>
<reference key="2">
    <citation type="journal article" date="2023" name="Cell">
        <title>A conserved family of immune effectors cleaves cellular ATP upon viral infection.</title>
        <authorList>
            <person name="Rousset F."/>
            <person name="Yirmiya E."/>
            <person name="Nesher S."/>
            <person name="Brandis A."/>
            <person name="Mehlman T."/>
            <person name="Itkin M."/>
            <person name="Malitsky S."/>
            <person name="Millman A."/>
            <person name="Melamed S."/>
            <person name="Sorek R."/>
        </authorList>
    </citation>
    <scope>FUNCTION IN VIRAL DEFENSE</scope>
    <source>
        <strain>KTE188</strain>
    </source>
</reference>
<keyword id="KW-0051">Antiviral defense</keyword>
<keyword id="KW-0238">DNA-binding</keyword>
<keyword id="KW-0678">Repressor</keyword>
<keyword id="KW-0804">Transcription</keyword>
<keyword id="KW-0805">Transcription regulation</keyword>